<gene>
    <name type="primary">sycN</name>
</gene>
<geneLocation type="plasmid">
    <name>pYV</name>
</geneLocation>
<geneLocation type="plasmid">
    <name>pYVe227</name>
</geneLocation>
<geneLocation type="plasmid">
    <name>pYVa127/90</name>
</geneLocation>
<sequence>MSWIEPIISHFCQDLGVPTSSPLSPLIQLEMAQSGTLQLEQHGATLTLWLARSLAWHQCEDAMVKALTLTAAQKSGALPLRAGWLGENQLVLFVSLDERSLTLPLLHQAFEQLLRLQQEVLAP</sequence>
<accession>P0C2V8</accession>
<accession>P16162</accession>
<accession>Q52095</accession>
<accession>Q93KT9</accession>
<reference key="1">
    <citation type="journal article" date="1990" name="J. Bacteriol.">
        <title>The lcrE gene is part of an operon in the lcr region of Yersinia enterocolitica O:3.</title>
        <authorList>
            <person name="Viitanen A.-M."/>
            <person name="Toivanen P."/>
            <person name="Skurnik M."/>
        </authorList>
    </citation>
    <scope>NUCLEOTIDE SEQUENCE [GENOMIC DNA]</scope>
    <source>
        <strain>Serotype O:3</strain>
        <plasmid>pYV</plasmid>
    </source>
</reference>
<reference key="2">
    <citation type="submission" date="1998-10" db="EMBL/GenBank/DDBJ databases">
        <title>Detailed genetic map of the pYVe227 plasmid of Yersinia enterocolitica serotype O:9.</title>
        <authorList>
            <person name="Iriarte M."/>
            <person name="Lambermont I."/>
            <person name="Kerbourch C."/>
            <person name="Cornelis G.R."/>
        </authorList>
    </citation>
    <scope>NUCLEOTIDE SEQUENCE [GENOMIC DNA]</scope>
    <source>
        <strain>W22703 / Serotype O:9 / Biotype 2</strain>
        <plasmid>pYVe227</plasmid>
    </source>
</reference>
<reference key="3">
    <citation type="journal article" date="2003" name="Res. Microbiol.">
        <title>DNA sequence and analysis of the pYVa127/90 virulence plasmid of Yersinia enterocolitica strain A127/90.</title>
        <authorList>
            <person name="Foultier B."/>
            <person name="Cornelis G.R."/>
        </authorList>
    </citation>
    <scope>NUCLEOTIDE SEQUENCE [GENOMIC DNA]</scope>
    <source>
        <strain>A127/90 / Serotype O:8 / Biotype 1B</strain>
        <plasmid>pYVa127/90</plasmid>
    </source>
</reference>
<reference key="4">
    <citation type="journal article" date="1999" name="J. Bacteriol.">
        <title>Identification of SycN, YscX, and YscY, three new elements of the Yersinia Yop virulon.</title>
        <authorList>
            <person name="Iriarte M."/>
            <person name="Cornelis G.R."/>
        </authorList>
    </citation>
    <scope>FUNCTION</scope>
    <source>
        <plasmid>pYV</plasmid>
    </source>
</reference>
<reference key="5">
    <citation type="journal article" date="2001" name="J. Bacteriol.">
        <title>Regulated secretion of YopN by the type III machinery of Yersinia enterocolitica.</title>
        <authorList>
            <person name="Cheng L.W."/>
            <person name="Kay O."/>
            <person name="Schneewind O."/>
        </authorList>
    </citation>
    <scope>FUNCTION</scope>
    <scope>SUBUNIT</scope>
    <source>
        <strain>W22703 / Serotype O:9 / Biotype 2</strain>
    </source>
</reference>
<name>SYCN_YEREN</name>
<keyword id="KW-0997">Cell inner membrane</keyword>
<keyword id="KW-1003">Cell membrane</keyword>
<keyword id="KW-0143">Chaperone</keyword>
<keyword id="KW-0963">Cytoplasm</keyword>
<keyword id="KW-0472">Membrane</keyword>
<keyword id="KW-0614">Plasmid</keyword>
<protein>
    <recommendedName>
        <fullName>Chaperone protein SycN</fullName>
    </recommendedName>
</protein>
<organism>
    <name type="scientific">Yersinia enterocolitica</name>
    <dbReference type="NCBI Taxonomy" id="630"/>
    <lineage>
        <taxon>Bacteria</taxon>
        <taxon>Pseudomonadati</taxon>
        <taxon>Pseudomonadota</taxon>
        <taxon>Gammaproteobacteria</taxon>
        <taxon>Enterobacterales</taxon>
        <taxon>Yersiniaceae</taxon>
        <taxon>Yersinia</taxon>
    </lineage>
</organism>
<dbReference type="EMBL" id="M32097">
    <property type="protein sequence ID" value="AAA98431.1"/>
    <property type="molecule type" value="Genomic_DNA"/>
</dbReference>
<dbReference type="EMBL" id="AF102990">
    <property type="protein sequence ID" value="AAD16821.1"/>
    <property type="molecule type" value="Genomic_DNA"/>
</dbReference>
<dbReference type="EMBL" id="AY150843">
    <property type="protein sequence ID" value="AAN37520.1"/>
    <property type="molecule type" value="Genomic_DNA"/>
</dbReference>
<dbReference type="PIR" id="C35392">
    <property type="entry name" value="C35392"/>
</dbReference>
<dbReference type="RefSeq" id="NP_052398.1">
    <property type="nucleotide sequence ID" value="NC_002120.1"/>
</dbReference>
<dbReference type="RefSeq" id="NP_783671.1">
    <property type="nucleotide sequence ID" value="NC_004564.1"/>
</dbReference>
<dbReference type="RefSeq" id="NP_863520.1">
    <property type="nucleotide sequence ID" value="NC_005017.1"/>
</dbReference>
<dbReference type="RefSeq" id="WP_005176811.1">
    <property type="nucleotide sequence ID" value="NZ_NWMR01000033.1"/>
</dbReference>
<dbReference type="RefSeq" id="WP_010891215.1">
    <property type="nucleotide sequence ID" value="NZ_JBGEVU010000058.1"/>
</dbReference>
<dbReference type="SMR" id="P0C2V8"/>
<dbReference type="GeneID" id="31412301"/>
<dbReference type="KEGG" id="yet:CH48_4215"/>
<dbReference type="PATRIC" id="fig|630.129.peg.4359"/>
<dbReference type="GO" id="GO:0005737">
    <property type="term" value="C:cytoplasm"/>
    <property type="evidence" value="ECO:0007669"/>
    <property type="project" value="UniProtKB-SubCell"/>
</dbReference>
<dbReference type="GO" id="GO:0005886">
    <property type="term" value="C:plasma membrane"/>
    <property type="evidence" value="ECO:0007669"/>
    <property type="project" value="UniProtKB-SubCell"/>
</dbReference>
<dbReference type="GO" id="GO:0009306">
    <property type="term" value="P:protein secretion"/>
    <property type="evidence" value="ECO:0007669"/>
    <property type="project" value="InterPro"/>
</dbReference>
<dbReference type="CDD" id="cd17031">
    <property type="entry name" value="T3SC_IA_SycN-like"/>
    <property type="match status" value="1"/>
</dbReference>
<dbReference type="Gene3D" id="3.30.1460.10">
    <property type="match status" value="1"/>
</dbReference>
<dbReference type="InterPro" id="IPR012673">
    <property type="entry name" value="T3SS_SynN"/>
</dbReference>
<dbReference type="NCBIfam" id="TIGR02503">
    <property type="entry name" value="type_III_SycN"/>
    <property type="match status" value="1"/>
</dbReference>
<dbReference type="Pfam" id="PF21665">
    <property type="entry name" value="Type_III_SycN"/>
    <property type="match status" value="1"/>
</dbReference>
<dbReference type="SUPFAM" id="SSF69635">
    <property type="entry name" value="Type III secretory system chaperone-like"/>
    <property type="match status" value="1"/>
</dbReference>
<proteinExistence type="evidence at protein level"/>
<feature type="chain" id="PRO_0000072359" description="Chaperone protein SycN">
    <location>
        <begin position="1"/>
        <end position="123"/>
    </location>
</feature>
<feature type="sequence variant" description="In plasmid pYVa127/90.">
    <original>Q</original>
    <variation>R</variation>
    <location>
        <position position="58"/>
    </location>
</feature>
<feature type="sequence variant" description="In plasmid pYVa127/90.">
    <original>A</original>
    <variation>T</variation>
    <location>
        <position position="77"/>
    </location>
</feature>
<feature type="sequence variant" description="In plasmid pYVa127/90.">
    <original>N</original>
    <variation>S</variation>
    <location>
        <position position="88"/>
    </location>
</feature>
<comment type="function">
    <text evidence="2 3">Functions as a specific chaperone for YopN. It could facilitate the secretion and the subsequent translocation of YopN.</text>
</comment>
<comment type="subunit">
    <text evidence="2">Interacts with YscB to form a complex which specifically binds to YopN.</text>
</comment>
<comment type="subcellular location">
    <subcellularLocation>
        <location evidence="1">Cytoplasm</location>
    </subcellularLocation>
    <subcellularLocation>
        <location evidence="1">Cell inner membrane</location>
        <topology evidence="1">Peripheral membrane protein</topology>
    </subcellularLocation>
    <text evidence="1">Not exported across the inner membrane.</text>
</comment>
<evidence type="ECO:0000250" key="1"/>
<evidence type="ECO:0000269" key="2">
    <source>
    </source>
</evidence>
<evidence type="ECO:0000269" key="3">
    <source>
    </source>
</evidence>